<gene>
    <name evidence="1" type="primary">nadX</name>
    <name type="ordered locus">BURPS668_A1314</name>
</gene>
<protein>
    <recommendedName>
        <fullName evidence="1">L-aspartate dehydrogenase</fullName>
        <ecNumber evidence="1">1.4.1.21</ecNumber>
    </recommendedName>
</protein>
<evidence type="ECO:0000255" key="1">
    <source>
        <dbReference type="HAMAP-Rule" id="MF_01265"/>
    </source>
</evidence>
<keyword id="KW-0520">NAD</keyword>
<keyword id="KW-0521">NADP</keyword>
<keyword id="KW-0560">Oxidoreductase</keyword>
<keyword id="KW-0662">Pyridine nucleotide biosynthesis</keyword>
<dbReference type="EC" id="1.4.1.21" evidence="1"/>
<dbReference type="EMBL" id="CP000571">
    <property type="protein sequence ID" value="ABN88349.1"/>
    <property type="molecule type" value="Genomic_DNA"/>
</dbReference>
<dbReference type="RefSeq" id="WP_004195445.1">
    <property type="nucleotide sequence ID" value="NC_009075.1"/>
</dbReference>
<dbReference type="SMR" id="A3NIZ0"/>
<dbReference type="KEGG" id="bpd:BURPS668_A1314"/>
<dbReference type="HOGENOM" id="CLU_089550_0_0_4"/>
<dbReference type="UniPathway" id="UPA00253">
    <property type="reaction ID" value="UER00456"/>
</dbReference>
<dbReference type="GO" id="GO:0033735">
    <property type="term" value="F:aspartate dehydrogenase activity"/>
    <property type="evidence" value="ECO:0007669"/>
    <property type="project" value="UniProtKB-EC"/>
</dbReference>
<dbReference type="GO" id="GO:0051287">
    <property type="term" value="F:NAD binding"/>
    <property type="evidence" value="ECO:0007669"/>
    <property type="project" value="UniProtKB-UniRule"/>
</dbReference>
<dbReference type="GO" id="GO:0050661">
    <property type="term" value="F:NADP binding"/>
    <property type="evidence" value="ECO:0007669"/>
    <property type="project" value="UniProtKB-UniRule"/>
</dbReference>
<dbReference type="GO" id="GO:0016639">
    <property type="term" value="F:oxidoreductase activity, acting on the CH-NH2 group of donors, NAD or NADP as acceptor"/>
    <property type="evidence" value="ECO:0007669"/>
    <property type="project" value="UniProtKB-UniRule"/>
</dbReference>
<dbReference type="GO" id="GO:0009435">
    <property type="term" value="P:NAD biosynthetic process"/>
    <property type="evidence" value="ECO:0007669"/>
    <property type="project" value="UniProtKB-UniRule"/>
</dbReference>
<dbReference type="Gene3D" id="3.30.360.10">
    <property type="entry name" value="Dihydrodipicolinate Reductase, domain 2"/>
    <property type="match status" value="1"/>
</dbReference>
<dbReference type="Gene3D" id="3.40.50.720">
    <property type="entry name" value="NAD(P)-binding Rossmann-like Domain"/>
    <property type="match status" value="1"/>
</dbReference>
<dbReference type="HAMAP" id="MF_01265">
    <property type="entry name" value="NadX"/>
    <property type="match status" value="1"/>
</dbReference>
<dbReference type="InterPro" id="IPR005106">
    <property type="entry name" value="Asp/hSer_DH_NAD-bd"/>
</dbReference>
<dbReference type="InterPro" id="IPR002811">
    <property type="entry name" value="Asp_DH"/>
</dbReference>
<dbReference type="InterPro" id="IPR020626">
    <property type="entry name" value="Asp_DH_prok"/>
</dbReference>
<dbReference type="InterPro" id="IPR011182">
    <property type="entry name" value="L-Asp_DH"/>
</dbReference>
<dbReference type="InterPro" id="IPR036291">
    <property type="entry name" value="NAD(P)-bd_dom_sf"/>
</dbReference>
<dbReference type="NCBIfam" id="NF009826">
    <property type="entry name" value="PRK13303.1-1"/>
    <property type="match status" value="1"/>
</dbReference>
<dbReference type="NCBIfam" id="NF009827">
    <property type="entry name" value="PRK13303.1-2"/>
    <property type="match status" value="1"/>
</dbReference>
<dbReference type="NCBIfam" id="NF009828">
    <property type="entry name" value="PRK13303.1-3"/>
    <property type="match status" value="1"/>
</dbReference>
<dbReference type="PANTHER" id="PTHR31873:SF6">
    <property type="entry name" value="ASPARTATE DEHYDROGENASE DOMAIN-CONTAINING PROTEIN"/>
    <property type="match status" value="1"/>
</dbReference>
<dbReference type="PANTHER" id="PTHR31873">
    <property type="entry name" value="L-ASPARTATE DEHYDROGENASE-RELATED"/>
    <property type="match status" value="1"/>
</dbReference>
<dbReference type="Pfam" id="PF01958">
    <property type="entry name" value="Asp_DH_C"/>
    <property type="match status" value="1"/>
</dbReference>
<dbReference type="Pfam" id="PF03447">
    <property type="entry name" value="NAD_binding_3"/>
    <property type="match status" value="1"/>
</dbReference>
<dbReference type="PIRSF" id="PIRSF005227">
    <property type="entry name" value="Asp_dh_NAD_syn"/>
    <property type="match status" value="1"/>
</dbReference>
<dbReference type="SUPFAM" id="SSF55347">
    <property type="entry name" value="Glyceraldehyde-3-phosphate dehydrogenase-like, C-terminal domain"/>
    <property type="match status" value="1"/>
</dbReference>
<dbReference type="SUPFAM" id="SSF51735">
    <property type="entry name" value="NAD(P)-binding Rossmann-fold domains"/>
    <property type="match status" value="1"/>
</dbReference>
<proteinExistence type="inferred from homology"/>
<accession>A3NIZ0</accession>
<sequence length="271" mass="27747">MRNAHAPVDVAMIGFGAIGAAVYRAVEHDAALRVAHVIVPEHQCDAVRGALGERVDVVSSVDALACRPQFALECAGHGALVDHVVPLLKAGTDCAVASIGALSDLALLDALSNAADAGGATLTLLSGAIGGIDALAAARQGGLDEVRYIGRKPPLGWLGTPAEAICDLRAMAAEQTIFEGSARDAAQLYPRNANVAATVALAGVGLDATRVCLIADPAVTRNVHRIVARGAFGEMSIEMSGKPLPDNPKTSALTAFSAIRALRNRASHCVI</sequence>
<organism>
    <name type="scientific">Burkholderia pseudomallei (strain 668)</name>
    <dbReference type="NCBI Taxonomy" id="320373"/>
    <lineage>
        <taxon>Bacteria</taxon>
        <taxon>Pseudomonadati</taxon>
        <taxon>Pseudomonadota</taxon>
        <taxon>Betaproteobacteria</taxon>
        <taxon>Burkholderiales</taxon>
        <taxon>Burkholderiaceae</taxon>
        <taxon>Burkholderia</taxon>
        <taxon>pseudomallei group</taxon>
    </lineage>
</organism>
<feature type="chain" id="PRO_1000067299" description="L-aspartate dehydrogenase">
    <location>
        <begin position="1"/>
        <end position="271"/>
    </location>
</feature>
<feature type="active site" evidence="1">
    <location>
        <position position="224"/>
    </location>
</feature>
<feature type="binding site" evidence="1">
    <location>
        <position position="128"/>
    </location>
    <ligand>
        <name>NAD(+)</name>
        <dbReference type="ChEBI" id="CHEBI:57540"/>
    </ligand>
</feature>
<feature type="binding site" evidence="1">
    <location>
        <position position="194"/>
    </location>
    <ligand>
        <name>NAD(+)</name>
        <dbReference type="ChEBI" id="CHEBI:57540"/>
    </ligand>
</feature>
<reference key="1">
    <citation type="journal article" date="2010" name="Genome Biol. Evol.">
        <title>Continuing evolution of Burkholderia mallei through genome reduction and large-scale rearrangements.</title>
        <authorList>
            <person name="Losada L."/>
            <person name="Ronning C.M."/>
            <person name="DeShazer D."/>
            <person name="Woods D."/>
            <person name="Fedorova N."/>
            <person name="Kim H.S."/>
            <person name="Shabalina S.A."/>
            <person name="Pearson T.R."/>
            <person name="Brinkac L."/>
            <person name="Tan P."/>
            <person name="Nandi T."/>
            <person name="Crabtree J."/>
            <person name="Badger J."/>
            <person name="Beckstrom-Sternberg S."/>
            <person name="Saqib M."/>
            <person name="Schutzer S.E."/>
            <person name="Keim P."/>
            <person name="Nierman W.C."/>
        </authorList>
    </citation>
    <scope>NUCLEOTIDE SEQUENCE [LARGE SCALE GENOMIC DNA]</scope>
    <source>
        <strain>668</strain>
    </source>
</reference>
<comment type="function">
    <text evidence="1">Specifically catalyzes the NAD or NADP-dependent dehydrogenation of L-aspartate to iminoaspartate.</text>
</comment>
<comment type="catalytic activity">
    <reaction evidence="1">
        <text>L-aspartate + NADP(+) + H2O = oxaloacetate + NH4(+) + NADPH + H(+)</text>
        <dbReference type="Rhea" id="RHEA:11784"/>
        <dbReference type="ChEBI" id="CHEBI:15377"/>
        <dbReference type="ChEBI" id="CHEBI:15378"/>
        <dbReference type="ChEBI" id="CHEBI:16452"/>
        <dbReference type="ChEBI" id="CHEBI:28938"/>
        <dbReference type="ChEBI" id="CHEBI:29991"/>
        <dbReference type="ChEBI" id="CHEBI:57783"/>
        <dbReference type="ChEBI" id="CHEBI:58349"/>
        <dbReference type="EC" id="1.4.1.21"/>
    </reaction>
</comment>
<comment type="catalytic activity">
    <reaction evidence="1">
        <text>L-aspartate + NAD(+) + H2O = oxaloacetate + NH4(+) + NADH + H(+)</text>
        <dbReference type="Rhea" id="RHEA:11788"/>
        <dbReference type="ChEBI" id="CHEBI:15377"/>
        <dbReference type="ChEBI" id="CHEBI:15378"/>
        <dbReference type="ChEBI" id="CHEBI:16452"/>
        <dbReference type="ChEBI" id="CHEBI:28938"/>
        <dbReference type="ChEBI" id="CHEBI:29991"/>
        <dbReference type="ChEBI" id="CHEBI:57540"/>
        <dbReference type="ChEBI" id="CHEBI:57945"/>
        <dbReference type="EC" id="1.4.1.21"/>
    </reaction>
</comment>
<comment type="pathway">
    <text evidence="1">Cofactor biosynthesis; NAD(+) biosynthesis; iminoaspartate from L-aspartate (dehydrogenase route): step 1/1.</text>
</comment>
<comment type="miscellaneous">
    <text evidence="1">The iminoaspartate product is unstable in aqueous solution and can decompose to oxaloacetate and ammonia.</text>
</comment>
<comment type="similarity">
    <text evidence="1">Belongs to the L-aspartate dehydrogenase family.</text>
</comment>
<name>ASPD_BURP6</name>